<comment type="function">
    <text evidence="2">Has hemolytic and lethal activities. Its hemolytic activity is inhibited by anionic lipids, especially potently by cardiolipin.</text>
</comment>
<comment type="subunit">
    <text evidence="2">Heterodimer of alpha and beta subunits.</text>
</comment>
<comment type="subcellular location">
    <subcellularLocation>
        <location evidence="2">Secreted</location>
    </subcellularLocation>
    <text>Secreted into the venom gland lumen. The secretion is proved by the fact that the complete sequence showed below is found in the venom gland's lumen, although no signal peptide has been found. This protein may follow a novel secretion pathway. It has been reported that venom-secreting cells of stonefishes do not possess Golgi apparatus and rough endoplasmic reticulum.</text>
</comment>
<comment type="tissue specificity">
    <text>Expressed by the venom gland.</text>
</comment>
<comment type="PTM">
    <text>Not glycosylated.</text>
</comment>
<comment type="PTM">
    <text>Four intrachain disulfide linkages are present in the heterodimer. No interchain disulfide bound links the two subunits.</text>
</comment>
<comment type="toxic dose">
    <text evidence="2">LD(50) is 0.047 mg/kg by intravenous injection into mice.</text>
</comment>
<comment type="similarity">
    <text evidence="3">Belongs to the SNTX/VTX toxin family.</text>
</comment>
<dbReference type="EMBL" id="AB262393">
    <property type="protein sequence ID" value="BAF41222.1"/>
    <property type="molecule type" value="mRNA"/>
</dbReference>
<dbReference type="SMR" id="A0ZSK4"/>
<dbReference type="GO" id="GO:0005576">
    <property type="term" value="C:extracellular region"/>
    <property type="evidence" value="ECO:0007669"/>
    <property type="project" value="UniProtKB-SubCell"/>
</dbReference>
<dbReference type="GO" id="GO:0090729">
    <property type="term" value="F:toxin activity"/>
    <property type="evidence" value="ECO:0007669"/>
    <property type="project" value="UniProtKB-KW"/>
</dbReference>
<dbReference type="GO" id="GO:0031640">
    <property type="term" value="P:killing of cells of another organism"/>
    <property type="evidence" value="ECO:0007669"/>
    <property type="project" value="UniProtKB-KW"/>
</dbReference>
<dbReference type="CDD" id="cd16040">
    <property type="entry name" value="SPRY_PRY_SNTX"/>
    <property type="match status" value="1"/>
</dbReference>
<dbReference type="Gene3D" id="2.60.120.920">
    <property type="match status" value="1"/>
</dbReference>
<dbReference type="InterPro" id="IPR001870">
    <property type="entry name" value="B30.2/SPRY"/>
</dbReference>
<dbReference type="InterPro" id="IPR043136">
    <property type="entry name" value="B30.2/SPRY_sf"/>
</dbReference>
<dbReference type="InterPro" id="IPR003879">
    <property type="entry name" value="Butyrophylin_SPRY"/>
</dbReference>
<dbReference type="InterPro" id="IPR013320">
    <property type="entry name" value="ConA-like_dom_sf"/>
</dbReference>
<dbReference type="InterPro" id="IPR052090">
    <property type="entry name" value="Cytolytic_pore-forming_toxin"/>
</dbReference>
<dbReference type="InterPro" id="IPR006574">
    <property type="entry name" value="PRY"/>
</dbReference>
<dbReference type="InterPro" id="IPR056072">
    <property type="entry name" value="SNTX_MACPF/CDC-like_dom"/>
</dbReference>
<dbReference type="InterPro" id="IPR003877">
    <property type="entry name" value="SPRY_dom"/>
</dbReference>
<dbReference type="InterPro" id="IPR048997">
    <property type="entry name" value="Stonustoxin-like_helical"/>
</dbReference>
<dbReference type="InterPro" id="IPR040581">
    <property type="entry name" value="Thioredoxin_11"/>
</dbReference>
<dbReference type="PANTHER" id="PTHR31594">
    <property type="entry name" value="AIG1-TYPE G DOMAIN-CONTAINING PROTEIN"/>
    <property type="match status" value="1"/>
</dbReference>
<dbReference type="PANTHER" id="PTHR31594:SF16">
    <property type="entry name" value="SI:CH211-281L24.3"/>
    <property type="match status" value="1"/>
</dbReference>
<dbReference type="Pfam" id="PF24674">
    <property type="entry name" value="MACPF_SNTX"/>
    <property type="match status" value="1"/>
</dbReference>
<dbReference type="Pfam" id="PF13765">
    <property type="entry name" value="PRY"/>
    <property type="match status" value="1"/>
</dbReference>
<dbReference type="Pfam" id="PF00622">
    <property type="entry name" value="SPRY"/>
    <property type="match status" value="1"/>
</dbReference>
<dbReference type="Pfam" id="PF21109">
    <property type="entry name" value="Stonustoxin_helical"/>
    <property type="match status" value="1"/>
</dbReference>
<dbReference type="Pfam" id="PF18078">
    <property type="entry name" value="Thioredoxin_11"/>
    <property type="match status" value="1"/>
</dbReference>
<dbReference type="PRINTS" id="PR01407">
    <property type="entry name" value="BUTYPHLNCDUF"/>
</dbReference>
<dbReference type="SMART" id="SM00589">
    <property type="entry name" value="PRY"/>
    <property type="match status" value="1"/>
</dbReference>
<dbReference type="SMART" id="SM00449">
    <property type="entry name" value="SPRY"/>
    <property type="match status" value="1"/>
</dbReference>
<dbReference type="SUPFAM" id="SSF49899">
    <property type="entry name" value="Concanavalin A-like lectins/glucanases"/>
    <property type="match status" value="1"/>
</dbReference>
<dbReference type="PROSITE" id="PS50188">
    <property type="entry name" value="B302_SPRY"/>
    <property type="match status" value="1"/>
</dbReference>
<organism>
    <name type="scientific">Synanceia verrucosa</name>
    <name type="common">Reef stonefish</name>
    <dbReference type="NCBI Taxonomy" id="51996"/>
    <lineage>
        <taxon>Eukaryota</taxon>
        <taxon>Metazoa</taxon>
        <taxon>Chordata</taxon>
        <taxon>Craniata</taxon>
        <taxon>Vertebrata</taxon>
        <taxon>Euteleostomi</taxon>
        <taxon>Actinopterygii</taxon>
        <taxon>Neopterygii</taxon>
        <taxon>Teleostei</taxon>
        <taxon>Neoteleostei</taxon>
        <taxon>Acanthomorphata</taxon>
        <taxon>Eupercaria</taxon>
        <taxon>Perciformes</taxon>
        <taxon>Scorpaenoidei</taxon>
        <taxon>Synanceiidae</taxon>
        <taxon>Synanceiinae</taxon>
        <taxon>Synanceia</taxon>
    </lineage>
</organism>
<proteinExistence type="evidence at protein level"/>
<accession>A0ZSK4</accession>
<keyword id="KW-0204">Cytolysis</keyword>
<keyword id="KW-0903">Direct protein sequencing</keyword>
<keyword id="KW-1015">Disulfide bond</keyword>
<keyword id="KW-0354">Hemolysis</keyword>
<keyword id="KW-0964">Secreted</keyword>
<keyword id="KW-0800">Toxin</keyword>
<name>STXB_SYNVE</name>
<feature type="initiator methionine" description="Removed" evidence="2">
    <location>
        <position position="1"/>
    </location>
</feature>
<feature type="chain" id="PRO_0000353124" description="Neoverrucotoxin subunit beta">
    <location>
        <begin position="2"/>
        <end position="700"/>
    </location>
</feature>
<feature type="domain" description="B30.2/SPRY" evidence="1">
    <location>
        <begin position="506"/>
        <end position="700"/>
    </location>
</feature>
<reference key="1">
    <citation type="journal article" date="2006" name="Biochim. Biophys. Acta">
        <title>Purification, properties and cDNA cloning of neoverrucotoxin (neoVTX), a hemolytic lethal factor from the stonefish Synanceia verrucosa venom.</title>
        <authorList>
            <person name="Ueda A."/>
            <person name="Suzuki M."/>
            <person name="Honma T."/>
            <person name="Nagai H."/>
            <person name="Nagashima Y."/>
            <person name="Shiomi K."/>
        </authorList>
    </citation>
    <scope>NUCLEOTIDE SEQUENCE [MRNA]</scope>
    <scope>PROTEIN SEQUENCE OF 2-10</scope>
    <scope>FUNCTION</scope>
    <scope>SUBUNIT</scope>
    <scope>SUBCELLULAR LOCATION</scope>
    <scope>NUMBER OF DISULFIDE BONDS</scope>
    <scope>TOXIC DOSE</scope>
    <source>
        <tissue>Venom</tissue>
        <tissue>Venom gland</tissue>
    </source>
</reference>
<evidence type="ECO:0000255" key="1">
    <source>
        <dbReference type="PROSITE-ProRule" id="PRU00548"/>
    </source>
</evidence>
<evidence type="ECO:0000269" key="2">
    <source>
    </source>
</evidence>
<evidence type="ECO:0000305" key="3"/>
<protein>
    <recommendedName>
        <fullName>Neoverrucotoxin subunit beta</fullName>
        <shortName>NeoVTX subunit beta</shortName>
    </recommendedName>
</protein>
<sequence length="700" mass="79500">MPSDILVVAALGRPFTLGMLYDARNDKLIPGFTLWEDEVIEESTVESSQPSSAFEIIASDSIDDKSSLMDIEASLKASFLGGLVEVGGSAKYLNNQKKFKNQSRVTLQYKATTNFKQLMTNLGTKHVEYSELFENIQATHVVIGILYGANAFFVFDSNKVDSTNVQEIQGQMEAVIKKIPSVEISGKASVQLTSEETDITNSFSCEFHGDFFLTSNPTTFEDAVKTYQQLPQMMGKDNAVPMTVWLVPMVNFYSEAPQLMADSSTPILRKVRNTLEAIVQVQMRCNDALDDPTVNLFTEVQKKLSDFQIICDDHMSKLQATIAKKLFAIRSGDEDESALVNLFEENLQSPFNIESLNMWMEFEEREINVLKSCMDILTKAKPKVIFNQGVLFKELYDSKVKHGLCYVFTNVTKNDDFLTVLNDFLDSPQSRPKKLRPSPKDYWYSYDDIPEMMREKAHLFRNLAKEMNNRCVHFFVTAINNPKQEGAGIHYYRESIQIIHEFTKPHMPGVETIKDRRELQWYDCELTLDTETAHQVLTLSEGNKKAVSGSTKSPADHFEKFSHFQQVMCTKGLSGRHYWELEWSGHVSAGVTYKGISRKTSTPDSSLGKNQKSWVFEYTKKSGYQQIHNGKNARVTVSSIGFKQLGVYLDWPAGTLSFYMVNKAWVTHLHTFHTKFYEAVYPAFLIGDAQQKVNGQIKLL</sequence>